<accession>C0RI89</accession>
<reference key="1">
    <citation type="submission" date="2009-03" db="EMBL/GenBank/DDBJ databases">
        <title>Brucella melitensis ATCC 23457 whole genome shotgun sequencing project.</title>
        <authorList>
            <person name="Setubal J.C."/>
            <person name="Boyle S."/>
            <person name="Crasta O.R."/>
            <person name="Gillespie J.J."/>
            <person name="Kenyon R.W."/>
            <person name="Lu J."/>
            <person name="Mane S."/>
            <person name="Nagrani S."/>
            <person name="Shallom J.M."/>
            <person name="Shallom S."/>
            <person name="Shukla M."/>
            <person name="Snyder E.E."/>
            <person name="Sobral B.W."/>
            <person name="Wattam A.R."/>
            <person name="Will R."/>
            <person name="Williams K."/>
            <person name="Yoo H."/>
            <person name="Munk C."/>
            <person name="Tapia R."/>
            <person name="Han C."/>
            <person name="Detter J.C."/>
            <person name="Bruce D."/>
            <person name="Brettin T.S."/>
        </authorList>
    </citation>
    <scope>NUCLEOTIDE SEQUENCE [LARGE SCALE GENOMIC DNA]</scope>
    <source>
        <strain>ATCC 23457</strain>
    </source>
</reference>
<proteinExistence type="inferred from homology"/>
<comment type="function">
    <text evidence="1">Aspartyl-tRNA synthetase with relaxed tRNA specificity since it is able to aspartylate not only its cognate tRNA(Asp) but also tRNA(Asn). Reaction proceeds in two steps: L-aspartate is first activated by ATP to form Asp-AMP and then transferred to the acceptor end of tRNA(Asp/Asn).</text>
</comment>
<comment type="catalytic activity">
    <reaction evidence="1">
        <text>tRNA(Asx) + L-aspartate + ATP = L-aspartyl-tRNA(Asx) + AMP + diphosphate</text>
        <dbReference type="Rhea" id="RHEA:18349"/>
        <dbReference type="Rhea" id="RHEA-COMP:9710"/>
        <dbReference type="Rhea" id="RHEA-COMP:9711"/>
        <dbReference type="ChEBI" id="CHEBI:29991"/>
        <dbReference type="ChEBI" id="CHEBI:30616"/>
        <dbReference type="ChEBI" id="CHEBI:33019"/>
        <dbReference type="ChEBI" id="CHEBI:78442"/>
        <dbReference type="ChEBI" id="CHEBI:78516"/>
        <dbReference type="ChEBI" id="CHEBI:456215"/>
        <dbReference type="EC" id="6.1.1.23"/>
    </reaction>
</comment>
<comment type="subunit">
    <text evidence="1">Homodimer.</text>
</comment>
<comment type="subcellular location">
    <subcellularLocation>
        <location evidence="1">Cytoplasm</location>
    </subcellularLocation>
</comment>
<comment type="similarity">
    <text evidence="1">Belongs to the class-II aminoacyl-tRNA synthetase family. Type 1 subfamily.</text>
</comment>
<feature type="chain" id="PRO_1000198966" description="Aspartate--tRNA(Asp/Asn) ligase">
    <location>
        <begin position="1"/>
        <end position="595"/>
    </location>
</feature>
<feature type="region of interest" description="Aspartate" evidence="1">
    <location>
        <begin position="199"/>
        <end position="202"/>
    </location>
</feature>
<feature type="binding site" evidence="1">
    <location>
        <position position="175"/>
    </location>
    <ligand>
        <name>L-aspartate</name>
        <dbReference type="ChEBI" id="CHEBI:29991"/>
    </ligand>
</feature>
<feature type="binding site" evidence="1">
    <location>
        <begin position="221"/>
        <end position="223"/>
    </location>
    <ligand>
        <name>ATP</name>
        <dbReference type="ChEBI" id="CHEBI:30616"/>
    </ligand>
</feature>
<feature type="binding site" evidence="1">
    <location>
        <position position="221"/>
    </location>
    <ligand>
        <name>L-aspartate</name>
        <dbReference type="ChEBI" id="CHEBI:29991"/>
    </ligand>
</feature>
<feature type="binding site" evidence="1">
    <location>
        <position position="454"/>
    </location>
    <ligand>
        <name>L-aspartate</name>
        <dbReference type="ChEBI" id="CHEBI:29991"/>
    </ligand>
</feature>
<feature type="binding site" evidence="1">
    <location>
        <position position="488"/>
    </location>
    <ligand>
        <name>ATP</name>
        <dbReference type="ChEBI" id="CHEBI:30616"/>
    </ligand>
</feature>
<feature type="binding site" evidence="1">
    <location>
        <position position="495"/>
    </location>
    <ligand>
        <name>L-aspartate</name>
        <dbReference type="ChEBI" id="CHEBI:29991"/>
    </ligand>
</feature>
<feature type="binding site" evidence="1">
    <location>
        <begin position="540"/>
        <end position="543"/>
    </location>
    <ligand>
        <name>ATP</name>
        <dbReference type="ChEBI" id="CHEBI:30616"/>
    </ligand>
</feature>
<feature type="site" description="Important for tRNA non-discrimination" evidence="1">
    <location>
        <position position="33"/>
    </location>
</feature>
<gene>
    <name evidence="1" type="primary">aspS</name>
    <name type="ordered locus">BMEA_A0791</name>
</gene>
<protein>
    <recommendedName>
        <fullName evidence="1">Aspartate--tRNA(Asp/Asn) ligase</fullName>
        <ecNumber evidence="1">6.1.1.23</ecNumber>
    </recommendedName>
    <alternativeName>
        <fullName evidence="1">Aspartyl-tRNA synthetase</fullName>
        <shortName evidence="1">AspRS</shortName>
    </alternativeName>
    <alternativeName>
        <fullName evidence="1">Non-discriminating aspartyl-tRNA synthetase</fullName>
        <shortName evidence="1">ND-AspRS</shortName>
    </alternativeName>
</protein>
<keyword id="KW-0030">Aminoacyl-tRNA synthetase</keyword>
<keyword id="KW-0067">ATP-binding</keyword>
<keyword id="KW-0963">Cytoplasm</keyword>
<keyword id="KW-0436">Ligase</keyword>
<keyword id="KW-0547">Nucleotide-binding</keyword>
<keyword id="KW-0648">Protein biosynthesis</keyword>
<sequence length="595" mass="67273">MHRYRSHTCAALRKTDVGSNVRLSGWVHRVRDHGGILFIDLRDHYGITQIVADPDSPAFKVAETVRGEWVIRVDGEVKARADDAVNTNLPTGEVEIFATEIEVLSPAKELPLPVFGEPDYPEDIRLKYRFLDLRRETLHKNIMSRTKIIAAMRRRMTEIGFNEFSTPILTASSPEGARDFLVPSRIHPGKFYALPQAPQQYKQLLMVAGFDRYFQIAPCFRDEDPRADRLPGEFYQLDLEMSFVTQEEVWETMEPVMRGIFEEFAEGKPVTKVFRRIAYDDAIRTYGSDKPDLRNPIEMQAVTDHFAGSGFKVFANMIANDAKVEVWAIPAKTGGSRAFCDRMNSWAQSEGQPGLGYIFWRKEGDKLEGAGPIAKNIGEERTEAIRKQMGLEDGDACFFVAGLPSKFYKFAGDARTRAGEELNLVDRDRFELAWIIDFPFYEWDEDNKKIDFAHNPFSMPQGGMDALENMDPLEIKAYQYDLVCNGFEIASGSIRNQLPEVMVKAFEKVGLSQQDVEERFGGLYRAFQYGAPPHGGMAAGIDRVIMLLVGAKNLREISLFPMNQQALDLLMGAPSEVSPAQLRDLHVRLAPVQKS</sequence>
<dbReference type="EC" id="6.1.1.23" evidence="1"/>
<dbReference type="EMBL" id="CP001488">
    <property type="protein sequence ID" value="ACO00547.1"/>
    <property type="molecule type" value="Genomic_DNA"/>
</dbReference>
<dbReference type="RefSeq" id="WP_004683546.1">
    <property type="nucleotide sequence ID" value="NC_012441.1"/>
</dbReference>
<dbReference type="SMR" id="C0RI89"/>
<dbReference type="GeneID" id="97533935"/>
<dbReference type="KEGG" id="bmi:BMEA_A0791"/>
<dbReference type="HOGENOM" id="CLU_014330_3_2_5"/>
<dbReference type="Proteomes" id="UP000001748">
    <property type="component" value="Chromosome I"/>
</dbReference>
<dbReference type="GO" id="GO:0005737">
    <property type="term" value="C:cytoplasm"/>
    <property type="evidence" value="ECO:0007669"/>
    <property type="project" value="UniProtKB-SubCell"/>
</dbReference>
<dbReference type="GO" id="GO:0004815">
    <property type="term" value="F:aspartate-tRNA ligase activity"/>
    <property type="evidence" value="ECO:0007669"/>
    <property type="project" value="UniProtKB-UniRule"/>
</dbReference>
<dbReference type="GO" id="GO:0050560">
    <property type="term" value="F:aspartate-tRNA(Asn) ligase activity"/>
    <property type="evidence" value="ECO:0007669"/>
    <property type="project" value="UniProtKB-EC"/>
</dbReference>
<dbReference type="GO" id="GO:0005524">
    <property type="term" value="F:ATP binding"/>
    <property type="evidence" value="ECO:0007669"/>
    <property type="project" value="UniProtKB-UniRule"/>
</dbReference>
<dbReference type="GO" id="GO:0003676">
    <property type="term" value="F:nucleic acid binding"/>
    <property type="evidence" value="ECO:0007669"/>
    <property type="project" value="InterPro"/>
</dbReference>
<dbReference type="GO" id="GO:0006422">
    <property type="term" value="P:aspartyl-tRNA aminoacylation"/>
    <property type="evidence" value="ECO:0007669"/>
    <property type="project" value="UniProtKB-UniRule"/>
</dbReference>
<dbReference type="CDD" id="cd00777">
    <property type="entry name" value="AspRS_core"/>
    <property type="match status" value="1"/>
</dbReference>
<dbReference type="CDD" id="cd04317">
    <property type="entry name" value="EcAspRS_like_N"/>
    <property type="match status" value="1"/>
</dbReference>
<dbReference type="Gene3D" id="3.30.930.10">
    <property type="entry name" value="Bira Bifunctional Protein, Domain 2"/>
    <property type="match status" value="1"/>
</dbReference>
<dbReference type="Gene3D" id="3.30.1360.30">
    <property type="entry name" value="GAD-like domain"/>
    <property type="match status" value="1"/>
</dbReference>
<dbReference type="Gene3D" id="2.40.50.140">
    <property type="entry name" value="Nucleic acid-binding proteins"/>
    <property type="match status" value="1"/>
</dbReference>
<dbReference type="HAMAP" id="MF_00044">
    <property type="entry name" value="Asp_tRNA_synth_type1"/>
    <property type="match status" value="1"/>
</dbReference>
<dbReference type="InterPro" id="IPR004364">
    <property type="entry name" value="Aa-tRNA-synt_II"/>
</dbReference>
<dbReference type="InterPro" id="IPR006195">
    <property type="entry name" value="aa-tRNA-synth_II"/>
</dbReference>
<dbReference type="InterPro" id="IPR045864">
    <property type="entry name" value="aa-tRNA-synth_II/BPL/LPL"/>
</dbReference>
<dbReference type="InterPro" id="IPR004524">
    <property type="entry name" value="Asp-tRNA-ligase_1"/>
</dbReference>
<dbReference type="InterPro" id="IPR047089">
    <property type="entry name" value="Asp-tRNA-ligase_1_N"/>
</dbReference>
<dbReference type="InterPro" id="IPR002312">
    <property type="entry name" value="Asp/Asn-tRNA-synth_IIb"/>
</dbReference>
<dbReference type="InterPro" id="IPR047090">
    <property type="entry name" value="AspRS_core"/>
</dbReference>
<dbReference type="InterPro" id="IPR004115">
    <property type="entry name" value="GAD-like_sf"/>
</dbReference>
<dbReference type="InterPro" id="IPR029351">
    <property type="entry name" value="GAD_dom"/>
</dbReference>
<dbReference type="InterPro" id="IPR012340">
    <property type="entry name" value="NA-bd_OB-fold"/>
</dbReference>
<dbReference type="InterPro" id="IPR004365">
    <property type="entry name" value="NA-bd_OB_tRNA"/>
</dbReference>
<dbReference type="NCBIfam" id="TIGR00459">
    <property type="entry name" value="aspS_bact"/>
    <property type="match status" value="1"/>
</dbReference>
<dbReference type="NCBIfam" id="NF001750">
    <property type="entry name" value="PRK00476.1"/>
    <property type="match status" value="1"/>
</dbReference>
<dbReference type="PANTHER" id="PTHR22594:SF5">
    <property type="entry name" value="ASPARTATE--TRNA LIGASE, MITOCHONDRIAL"/>
    <property type="match status" value="1"/>
</dbReference>
<dbReference type="PANTHER" id="PTHR22594">
    <property type="entry name" value="ASPARTYL/LYSYL-TRNA SYNTHETASE"/>
    <property type="match status" value="1"/>
</dbReference>
<dbReference type="Pfam" id="PF02938">
    <property type="entry name" value="GAD"/>
    <property type="match status" value="1"/>
</dbReference>
<dbReference type="Pfam" id="PF00152">
    <property type="entry name" value="tRNA-synt_2"/>
    <property type="match status" value="1"/>
</dbReference>
<dbReference type="Pfam" id="PF01336">
    <property type="entry name" value="tRNA_anti-codon"/>
    <property type="match status" value="1"/>
</dbReference>
<dbReference type="PRINTS" id="PR01042">
    <property type="entry name" value="TRNASYNTHASP"/>
</dbReference>
<dbReference type="SUPFAM" id="SSF55681">
    <property type="entry name" value="Class II aaRS and biotin synthetases"/>
    <property type="match status" value="1"/>
</dbReference>
<dbReference type="SUPFAM" id="SSF55261">
    <property type="entry name" value="GAD domain-like"/>
    <property type="match status" value="1"/>
</dbReference>
<dbReference type="SUPFAM" id="SSF50249">
    <property type="entry name" value="Nucleic acid-binding proteins"/>
    <property type="match status" value="1"/>
</dbReference>
<dbReference type="PROSITE" id="PS50862">
    <property type="entry name" value="AA_TRNA_LIGASE_II"/>
    <property type="match status" value="1"/>
</dbReference>
<organism>
    <name type="scientific">Brucella melitensis biotype 2 (strain ATCC 23457)</name>
    <dbReference type="NCBI Taxonomy" id="546272"/>
    <lineage>
        <taxon>Bacteria</taxon>
        <taxon>Pseudomonadati</taxon>
        <taxon>Pseudomonadota</taxon>
        <taxon>Alphaproteobacteria</taxon>
        <taxon>Hyphomicrobiales</taxon>
        <taxon>Brucellaceae</taxon>
        <taxon>Brucella/Ochrobactrum group</taxon>
        <taxon>Brucella</taxon>
    </lineage>
</organism>
<evidence type="ECO:0000255" key="1">
    <source>
        <dbReference type="HAMAP-Rule" id="MF_00044"/>
    </source>
</evidence>
<name>SYDND_BRUMB</name>